<protein>
    <recommendedName>
        <fullName evidence="1">AMP phosphorylase</fullName>
        <shortName evidence="1">AMPpase</shortName>
        <ecNumber evidence="1">2.4.2.57</ecNumber>
    </recommendedName>
    <alternativeName>
        <fullName evidence="1">Nucleoside monophosphate phosphorylase</fullName>
        <shortName evidence="1">NMP phosphorylase</shortName>
    </alternativeName>
</protein>
<evidence type="ECO:0000255" key="1">
    <source>
        <dbReference type="HAMAP-Rule" id="MF_02132"/>
    </source>
</evidence>
<keyword id="KW-0328">Glycosyltransferase</keyword>
<keyword id="KW-1185">Reference proteome</keyword>
<keyword id="KW-0808">Transferase</keyword>
<organism>
    <name type="scientific">Pyrococcus furiosus (strain ATCC 43587 / DSM 3638 / JCM 8422 / Vc1)</name>
    <dbReference type="NCBI Taxonomy" id="186497"/>
    <lineage>
        <taxon>Archaea</taxon>
        <taxon>Methanobacteriati</taxon>
        <taxon>Methanobacteriota</taxon>
        <taxon>Thermococci</taxon>
        <taxon>Thermococcales</taxon>
        <taxon>Thermococcaceae</taxon>
        <taxon>Pyrococcus</taxon>
    </lineage>
</organism>
<proteinExistence type="inferred from homology"/>
<dbReference type="EC" id="2.4.2.57" evidence="1"/>
<dbReference type="EMBL" id="AE009950">
    <property type="protein sequence ID" value="AAL81731.1"/>
    <property type="molecule type" value="Genomic_DNA"/>
</dbReference>
<dbReference type="RefSeq" id="WP_011012753.1">
    <property type="nucleotide sequence ID" value="NZ_CP023154.1"/>
</dbReference>
<dbReference type="SMR" id="Q8U0I2"/>
<dbReference type="STRING" id="186497.PF1607"/>
<dbReference type="PaxDb" id="186497-PF1607"/>
<dbReference type="KEGG" id="pfu:PF1607"/>
<dbReference type="PATRIC" id="fig|186497.12.peg.1673"/>
<dbReference type="eggNOG" id="arCOG02013">
    <property type="taxonomic scope" value="Archaea"/>
</dbReference>
<dbReference type="HOGENOM" id="CLU_025040_6_0_2"/>
<dbReference type="OrthoDB" id="9827at2157"/>
<dbReference type="PhylomeDB" id="Q8U0I2"/>
<dbReference type="Proteomes" id="UP000001013">
    <property type="component" value="Chromosome"/>
</dbReference>
<dbReference type="GO" id="GO:0005829">
    <property type="term" value="C:cytosol"/>
    <property type="evidence" value="ECO:0007669"/>
    <property type="project" value="TreeGrafter"/>
</dbReference>
<dbReference type="GO" id="GO:0004645">
    <property type="term" value="F:1,4-alpha-oligoglucan phosphorylase activity"/>
    <property type="evidence" value="ECO:0007669"/>
    <property type="project" value="InterPro"/>
</dbReference>
<dbReference type="GO" id="GO:0016208">
    <property type="term" value="F:AMP binding"/>
    <property type="evidence" value="ECO:0007669"/>
    <property type="project" value="UniProtKB-UniRule"/>
</dbReference>
<dbReference type="GO" id="GO:0016763">
    <property type="term" value="F:pentosyltransferase activity"/>
    <property type="evidence" value="ECO:0007669"/>
    <property type="project" value="UniProtKB-UniRule"/>
</dbReference>
<dbReference type="GO" id="GO:0006196">
    <property type="term" value="P:AMP catabolic process"/>
    <property type="evidence" value="ECO:0007669"/>
    <property type="project" value="UniProtKB-UniRule"/>
</dbReference>
<dbReference type="GO" id="GO:0046125">
    <property type="term" value="P:pyrimidine deoxyribonucleoside metabolic process"/>
    <property type="evidence" value="ECO:0007669"/>
    <property type="project" value="InterPro"/>
</dbReference>
<dbReference type="GO" id="GO:0006206">
    <property type="term" value="P:pyrimidine nucleobase metabolic process"/>
    <property type="evidence" value="ECO:0007669"/>
    <property type="project" value="InterPro"/>
</dbReference>
<dbReference type="FunFam" id="3.90.1170.30:FF:000004">
    <property type="entry name" value="AMP phosphorylase"/>
    <property type="match status" value="1"/>
</dbReference>
<dbReference type="Gene3D" id="1.20.970.50">
    <property type="match status" value="1"/>
</dbReference>
<dbReference type="Gene3D" id="2.40.40.20">
    <property type="match status" value="1"/>
</dbReference>
<dbReference type="Gene3D" id="3.40.1030.10">
    <property type="entry name" value="Nucleoside phosphorylase/phosphoribosyltransferase catalytic domain"/>
    <property type="match status" value="1"/>
</dbReference>
<dbReference type="Gene3D" id="3.90.1170.30">
    <property type="entry name" value="Pyrimidine nucleoside phosphorylase-like, C-terminal domain"/>
    <property type="match status" value="1"/>
</dbReference>
<dbReference type="HAMAP" id="MF_02132">
    <property type="entry name" value="AMP_phosphorylase"/>
    <property type="match status" value="1"/>
</dbReference>
<dbReference type="InterPro" id="IPR017713">
    <property type="entry name" value="AMP_phosphorylase"/>
</dbReference>
<dbReference type="InterPro" id="IPR009010">
    <property type="entry name" value="Asp_de-COase-like_dom_sf"/>
</dbReference>
<dbReference type="InterPro" id="IPR000312">
    <property type="entry name" value="Glycosyl_Trfase_fam3"/>
</dbReference>
<dbReference type="InterPro" id="IPR017459">
    <property type="entry name" value="Glycosyl_Trfase_fam3_N_dom"/>
</dbReference>
<dbReference type="InterPro" id="IPR036320">
    <property type="entry name" value="Glycosyl_Trfase_fam3_N_dom_sf"/>
</dbReference>
<dbReference type="InterPro" id="IPR035902">
    <property type="entry name" value="Nuc_phospho_transferase"/>
</dbReference>
<dbReference type="InterPro" id="IPR036566">
    <property type="entry name" value="PYNP-like_C_sf"/>
</dbReference>
<dbReference type="InterPro" id="IPR013102">
    <property type="entry name" value="PYNP_C"/>
</dbReference>
<dbReference type="InterPro" id="IPR017872">
    <property type="entry name" value="Pyrmidine_PPase_CS"/>
</dbReference>
<dbReference type="InterPro" id="IPR013466">
    <property type="entry name" value="Thymidine/AMP_Pase"/>
</dbReference>
<dbReference type="InterPro" id="IPR000053">
    <property type="entry name" value="Thymidine/pyrmidine_PPase"/>
</dbReference>
<dbReference type="NCBIfam" id="TIGR03327">
    <property type="entry name" value="AMP_phos"/>
    <property type="match status" value="1"/>
</dbReference>
<dbReference type="NCBIfam" id="TIGR02645">
    <property type="entry name" value="ARCH_P_rylase"/>
    <property type="match status" value="1"/>
</dbReference>
<dbReference type="NCBIfam" id="NF003338">
    <property type="entry name" value="PRK04350.1"/>
    <property type="match status" value="1"/>
</dbReference>
<dbReference type="PANTHER" id="PTHR10515">
    <property type="entry name" value="THYMIDINE PHOSPHORYLASE"/>
    <property type="match status" value="1"/>
</dbReference>
<dbReference type="PANTHER" id="PTHR10515:SF0">
    <property type="entry name" value="THYMIDINE PHOSPHORYLASE"/>
    <property type="match status" value="1"/>
</dbReference>
<dbReference type="Pfam" id="PF02885">
    <property type="entry name" value="Glycos_trans_3N"/>
    <property type="match status" value="1"/>
</dbReference>
<dbReference type="Pfam" id="PF00591">
    <property type="entry name" value="Glycos_transf_3"/>
    <property type="match status" value="1"/>
</dbReference>
<dbReference type="Pfam" id="PF07831">
    <property type="entry name" value="PYNP_C"/>
    <property type="match status" value="1"/>
</dbReference>
<dbReference type="SMART" id="SM00941">
    <property type="entry name" value="PYNP_C"/>
    <property type="match status" value="1"/>
</dbReference>
<dbReference type="SUPFAM" id="SSF50692">
    <property type="entry name" value="ADC-like"/>
    <property type="match status" value="1"/>
</dbReference>
<dbReference type="SUPFAM" id="SSF52418">
    <property type="entry name" value="Nucleoside phosphorylase/phosphoribosyltransferase catalytic domain"/>
    <property type="match status" value="1"/>
</dbReference>
<dbReference type="SUPFAM" id="SSF47648">
    <property type="entry name" value="Nucleoside phosphorylase/phosphoribosyltransferase N-terminal domain"/>
    <property type="match status" value="1"/>
</dbReference>
<dbReference type="SUPFAM" id="SSF54680">
    <property type="entry name" value="Pyrimidine nucleoside phosphorylase C-terminal domain"/>
    <property type="match status" value="1"/>
</dbReference>
<dbReference type="PROSITE" id="PS00647">
    <property type="entry name" value="THYMID_PHOSPHORYLASE"/>
    <property type="match status" value="1"/>
</dbReference>
<gene>
    <name type="ordered locus">PF1607</name>
</gene>
<accession>Q8U0I2</accession>
<comment type="function">
    <text evidence="1">Catalyzes the conversion of AMP and phosphate to adenine and ribose 1,5-bisphosphate (R15P). Exhibits phosphorylase activity toward CMP and UMP in addition to AMP. Functions in an archaeal AMP degradation pathway, together with R15P isomerase and RubisCO.</text>
</comment>
<comment type="catalytic activity">
    <reaction evidence="1">
        <text>AMP + phosphate = alpha-D-ribose 1,5-bisphosphate + adenine</text>
        <dbReference type="Rhea" id="RHEA:36975"/>
        <dbReference type="ChEBI" id="CHEBI:16708"/>
        <dbReference type="ChEBI" id="CHEBI:43474"/>
        <dbReference type="ChEBI" id="CHEBI:68688"/>
        <dbReference type="ChEBI" id="CHEBI:456215"/>
        <dbReference type="EC" id="2.4.2.57"/>
    </reaction>
</comment>
<comment type="catalytic activity">
    <reaction evidence="1">
        <text>CMP + phosphate = cytosine + alpha-D-ribose 1,5-bisphosphate</text>
        <dbReference type="Rhea" id="RHEA:36987"/>
        <dbReference type="ChEBI" id="CHEBI:16040"/>
        <dbReference type="ChEBI" id="CHEBI:43474"/>
        <dbReference type="ChEBI" id="CHEBI:60377"/>
        <dbReference type="ChEBI" id="CHEBI:68688"/>
        <dbReference type="EC" id="2.4.2.57"/>
    </reaction>
</comment>
<comment type="catalytic activity">
    <reaction evidence="1">
        <text>UMP + phosphate = alpha-D-ribose 1,5-bisphosphate + uracil</text>
        <dbReference type="Rhea" id="RHEA:36991"/>
        <dbReference type="ChEBI" id="CHEBI:17568"/>
        <dbReference type="ChEBI" id="CHEBI:43474"/>
        <dbReference type="ChEBI" id="CHEBI:57865"/>
        <dbReference type="ChEBI" id="CHEBI:68688"/>
        <dbReference type="EC" id="2.4.2.57"/>
    </reaction>
</comment>
<comment type="similarity">
    <text evidence="1">Belongs to the thymidine/pyrimidine-nucleoside phosphorylase family. Type 2 subfamily.</text>
</comment>
<name>AMPPA_PYRFU</name>
<sequence length="503" mass="54340">MRGKIKILDIETGNLAIFINPEDAEQWRIHPNDLVKIESGKRYIYGSAFIGNIVEKGEIGISKDVLSIHQFSNGEIVSLSPAGTPESVKYIKKKMRGEKLKKVEIETIVRDIVDRKLRNTEISAFVSAIEINGLDMEEIAALTIAMAETGDMLDIERKPIMDIHSIGGVPGNKTNVIVVPIVAAAGLTIPKTSSRAITSAAGTADVVEVLTNVTLTLEEIKRIVEKIGACLVWGGALNLAPADDLMIHVERRLSLDPRGLMLASIMAKKYAIGSQYILIDIPTGKGAKVESMEEARSLARDFIELGKRLGQYVEVAITYGGQPIGYTVGPALEAKEALETLMTGRGPGSLVEKAIGLAGLLLEMGGAAPKGKGKIIAREILEKGKAYQKMREIIEEQGGDPDIKPEDIPIGDKTYTIHAQTNGYVTAIDNRGITAIAREAGAPEDKGAGIRLHVKVGDKVKEGDPLFTIHAESESRLDKAIVLARRLEPIKIEGMVLQVIENL</sequence>
<feature type="chain" id="PRO_0000059091" description="AMP phosphorylase">
    <location>
        <begin position="1"/>
        <end position="503"/>
    </location>
</feature>
<feature type="active site" description="Proton donor" evidence="1">
    <location>
        <position position="256"/>
    </location>
</feature>
<feature type="binding site" evidence="1">
    <location>
        <position position="168"/>
    </location>
    <ligand>
        <name>AMP</name>
        <dbReference type="ChEBI" id="CHEBI:456215"/>
    </ligand>
</feature>
<feature type="binding site" evidence="1">
    <location>
        <begin position="194"/>
        <end position="199"/>
    </location>
    <ligand>
        <name>AMP</name>
        <dbReference type="ChEBI" id="CHEBI:456215"/>
    </ligand>
</feature>
<feature type="binding site" evidence="1">
    <location>
        <position position="203"/>
    </location>
    <ligand>
        <name>AMP</name>
        <dbReference type="ChEBI" id="CHEBI:456215"/>
    </ligand>
</feature>
<feature type="binding site" evidence="1">
    <location>
        <position position="264"/>
    </location>
    <ligand>
        <name>AMP</name>
        <dbReference type="ChEBI" id="CHEBI:456215"/>
    </ligand>
</feature>
<feature type="binding site" evidence="1">
    <location>
        <position position="288"/>
    </location>
    <ligand>
        <name>AMP</name>
        <dbReference type="ChEBI" id="CHEBI:456215"/>
    </ligand>
</feature>
<reference key="1">
    <citation type="journal article" date="1999" name="Genetics">
        <title>Divergence of the hyperthermophilic archaea Pyrococcus furiosus and P. horikoshii inferred from complete genomic sequences.</title>
        <authorList>
            <person name="Maeder D.L."/>
            <person name="Weiss R.B."/>
            <person name="Dunn D.M."/>
            <person name="Cherry J.L."/>
            <person name="Gonzalez J.M."/>
            <person name="DiRuggiero J."/>
            <person name="Robb F.T."/>
        </authorList>
    </citation>
    <scope>NUCLEOTIDE SEQUENCE [LARGE SCALE GENOMIC DNA]</scope>
    <source>
        <strain>ATCC 43587 / DSM 3638 / JCM 8422 / Vc1</strain>
    </source>
</reference>